<name>FABZ_CHLT2</name>
<comment type="function">
    <text evidence="1">Involved in unsaturated fatty acids biosynthesis. Catalyzes the dehydration of short chain beta-hydroxyacyl-ACPs and long chain saturated and unsaturated beta-hydroxyacyl-ACPs.</text>
</comment>
<comment type="catalytic activity">
    <reaction evidence="1">
        <text>a (3R)-hydroxyacyl-[ACP] = a (2E)-enoyl-[ACP] + H2O</text>
        <dbReference type="Rhea" id="RHEA:13097"/>
        <dbReference type="Rhea" id="RHEA-COMP:9925"/>
        <dbReference type="Rhea" id="RHEA-COMP:9945"/>
        <dbReference type="ChEBI" id="CHEBI:15377"/>
        <dbReference type="ChEBI" id="CHEBI:78784"/>
        <dbReference type="ChEBI" id="CHEBI:78827"/>
        <dbReference type="EC" id="4.2.1.59"/>
    </reaction>
</comment>
<comment type="subcellular location">
    <subcellularLocation>
        <location evidence="1">Cytoplasm</location>
    </subcellularLocation>
</comment>
<comment type="similarity">
    <text evidence="1">Belongs to the thioester dehydratase family. FabZ subfamily.</text>
</comment>
<feature type="chain" id="PRO_1000197285" description="3-hydroxyacyl-[acyl-carrier-protein] dehydratase FabZ">
    <location>
        <begin position="1"/>
        <end position="153"/>
    </location>
</feature>
<feature type="active site" evidence="1">
    <location>
        <position position="54"/>
    </location>
</feature>
<keyword id="KW-0963">Cytoplasm</keyword>
<keyword id="KW-0441">Lipid A biosynthesis</keyword>
<keyword id="KW-0444">Lipid biosynthesis</keyword>
<keyword id="KW-0443">Lipid metabolism</keyword>
<keyword id="KW-0456">Lyase</keyword>
<accession>B0B8A6</accession>
<gene>
    <name evidence="1" type="primary">fabZ</name>
    <name type="ordered locus">CTL0794</name>
</gene>
<dbReference type="EC" id="4.2.1.59" evidence="1"/>
<dbReference type="EMBL" id="AM884176">
    <property type="protein sequence ID" value="CAP04232.1"/>
    <property type="molecule type" value="Genomic_DNA"/>
</dbReference>
<dbReference type="RefSeq" id="WP_009871896.1">
    <property type="nucleotide sequence ID" value="NC_010287.1"/>
</dbReference>
<dbReference type="RefSeq" id="YP_001654865.1">
    <property type="nucleotide sequence ID" value="NC_010287.1"/>
</dbReference>
<dbReference type="SMR" id="B0B8A6"/>
<dbReference type="KEGG" id="ctb:CTL0794"/>
<dbReference type="PATRIC" id="fig|471472.4.peg.851"/>
<dbReference type="HOGENOM" id="CLU_078912_3_3_0"/>
<dbReference type="Proteomes" id="UP001154402">
    <property type="component" value="Chromosome"/>
</dbReference>
<dbReference type="GO" id="GO:0005737">
    <property type="term" value="C:cytoplasm"/>
    <property type="evidence" value="ECO:0007669"/>
    <property type="project" value="UniProtKB-SubCell"/>
</dbReference>
<dbReference type="GO" id="GO:0016020">
    <property type="term" value="C:membrane"/>
    <property type="evidence" value="ECO:0007669"/>
    <property type="project" value="GOC"/>
</dbReference>
<dbReference type="GO" id="GO:0019171">
    <property type="term" value="F:(3R)-hydroxyacyl-[acyl-carrier-protein] dehydratase activity"/>
    <property type="evidence" value="ECO:0007669"/>
    <property type="project" value="UniProtKB-EC"/>
</dbReference>
<dbReference type="GO" id="GO:0006633">
    <property type="term" value="P:fatty acid biosynthetic process"/>
    <property type="evidence" value="ECO:0007669"/>
    <property type="project" value="UniProtKB-UniRule"/>
</dbReference>
<dbReference type="GO" id="GO:0009245">
    <property type="term" value="P:lipid A biosynthetic process"/>
    <property type="evidence" value="ECO:0007669"/>
    <property type="project" value="UniProtKB-UniRule"/>
</dbReference>
<dbReference type="CDD" id="cd01288">
    <property type="entry name" value="FabZ"/>
    <property type="match status" value="1"/>
</dbReference>
<dbReference type="FunFam" id="3.10.129.10:FF:000001">
    <property type="entry name" value="3-hydroxyacyl-[acyl-carrier-protein] dehydratase FabZ"/>
    <property type="match status" value="1"/>
</dbReference>
<dbReference type="Gene3D" id="3.10.129.10">
    <property type="entry name" value="Hotdog Thioesterase"/>
    <property type="match status" value="1"/>
</dbReference>
<dbReference type="HAMAP" id="MF_00406">
    <property type="entry name" value="FabZ"/>
    <property type="match status" value="1"/>
</dbReference>
<dbReference type="InterPro" id="IPR013114">
    <property type="entry name" value="FabA_FabZ"/>
</dbReference>
<dbReference type="InterPro" id="IPR010084">
    <property type="entry name" value="FabZ"/>
</dbReference>
<dbReference type="InterPro" id="IPR029069">
    <property type="entry name" value="HotDog_dom_sf"/>
</dbReference>
<dbReference type="NCBIfam" id="TIGR01750">
    <property type="entry name" value="fabZ"/>
    <property type="match status" value="1"/>
</dbReference>
<dbReference type="NCBIfam" id="NF000582">
    <property type="entry name" value="PRK00006.1"/>
    <property type="match status" value="1"/>
</dbReference>
<dbReference type="PANTHER" id="PTHR30272">
    <property type="entry name" value="3-HYDROXYACYL-[ACYL-CARRIER-PROTEIN] DEHYDRATASE"/>
    <property type="match status" value="1"/>
</dbReference>
<dbReference type="PANTHER" id="PTHR30272:SF1">
    <property type="entry name" value="3-HYDROXYACYL-[ACYL-CARRIER-PROTEIN] DEHYDRATASE"/>
    <property type="match status" value="1"/>
</dbReference>
<dbReference type="Pfam" id="PF07977">
    <property type="entry name" value="FabA"/>
    <property type="match status" value="1"/>
</dbReference>
<dbReference type="SUPFAM" id="SSF54637">
    <property type="entry name" value="Thioesterase/thiol ester dehydrase-isomerase"/>
    <property type="match status" value="1"/>
</dbReference>
<evidence type="ECO:0000255" key="1">
    <source>
        <dbReference type="HAMAP-Rule" id="MF_00406"/>
    </source>
</evidence>
<organism>
    <name type="scientific">Chlamydia trachomatis serovar L2 (strain ATCC VR-902B / DSM 19102 / 434/Bu)</name>
    <dbReference type="NCBI Taxonomy" id="471472"/>
    <lineage>
        <taxon>Bacteria</taxon>
        <taxon>Pseudomonadati</taxon>
        <taxon>Chlamydiota</taxon>
        <taxon>Chlamydiia</taxon>
        <taxon>Chlamydiales</taxon>
        <taxon>Chlamydiaceae</taxon>
        <taxon>Chlamydia/Chlamydophila group</taxon>
        <taxon>Chlamydia</taxon>
    </lineage>
</organism>
<sequence length="153" mass="16624">MNEKPVLGIQDIQNLLPHRYPFLLVDKILSYDLNTRSVVAQKNVTINEPFFAGHFPGAPIMPGVLILEALAQAAGVLLGIILENDRDKKIALFLGIQKAKFRQPVKPGDVLTLKAEFSLISAKGGKAFAQAFVGSQVVAEGELSFVLVKKESI</sequence>
<reference key="1">
    <citation type="journal article" date="2008" name="Genome Res.">
        <title>Chlamydia trachomatis: genome sequence analysis of lymphogranuloma venereum isolates.</title>
        <authorList>
            <person name="Thomson N.R."/>
            <person name="Holden M.T.G."/>
            <person name="Carder C."/>
            <person name="Lennard N."/>
            <person name="Lockey S.J."/>
            <person name="Marsh P."/>
            <person name="Skipp P."/>
            <person name="O'Connor C.D."/>
            <person name="Goodhead I."/>
            <person name="Norbertzcak H."/>
            <person name="Harris B."/>
            <person name="Ormond D."/>
            <person name="Rance R."/>
            <person name="Quail M.A."/>
            <person name="Parkhill J."/>
            <person name="Stephens R.S."/>
            <person name="Clarke I.N."/>
        </authorList>
    </citation>
    <scope>NUCLEOTIDE SEQUENCE [LARGE SCALE GENOMIC DNA]</scope>
    <source>
        <strain>ATCC VR-902B / DSM 19102 / 434/Bu</strain>
    </source>
</reference>
<protein>
    <recommendedName>
        <fullName evidence="1">3-hydroxyacyl-[acyl-carrier-protein] dehydratase FabZ</fullName>
        <ecNumber evidence="1">4.2.1.59</ecNumber>
    </recommendedName>
    <alternativeName>
        <fullName evidence="1">(3R)-hydroxymyristoyl-[acyl-carrier-protein] dehydratase</fullName>
        <shortName evidence="1">(3R)-hydroxymyristoyl-ACP dehydrase</shortName>
    </alternativeName>
    <alternativeName>
        <fullName evidence="1">Beta-hydroxyacyl-ACP dehydratase</fullName>
    </alternativeName>
</protein>
<proteinExistence type="inferred from homology"/>